<protein>
    <recommendedName>
        <fullName>Oxidative stress-responsive serine-rich protein 1</fullName>
    </recommendedName>
    <alternativeName>
        <fullName>Oxidative stress-responsive protein 1</fullName>
    </alternativeName>
    <alternativeName>
        <fullName>Peroxide-inducible transcript 1 protein</fullName>
    </alternativeName>
</protein>
<evidence type="ECO:0000250" key="1">
    <source>
        <dbReference type="UniProtKB" id="Q703I1"/>
    </source>
</evidence>
<evidence type="ECO:0000256" key="2">
    <source>
        <dbReference type="SAM" id="MobiDB-lite"/>
    </source>
</evidence>
<evidence type="ECO:0000269" key="3">
    <source>
    </source>
</evidence>
<evidence type="ECO:0000305" key="4"/>
<keyword id="KW-0597">Phosphoprotein</keyword>
<keyword id="KW-1185">Reference proteome</keyword>
<proteinExistence type="evidence at transcript level"/>
<gene>
    <name type="primary">Oser1</name>
</gene>
<organism>
    <name type="scientific">Mus musculus</name>
    <name type="common">Mouse</name>
    <dbReference type="NCBI Taxonomy" id="10090"/>
    <lineage>
        <taxon>Eukaryota</taxon>
        <taxon>Metazoa</taxon>
        <taxon>Chordata</taxon>
        <taxon>Craniata</taxon>
        <taxon>Vertebrata</taxon>
        <taxon>Euteleostomi</taxon>
        <taxon>Mammalia</taxon>
        <taxon>Eutheria</taxon>
        <taxon>Euarchontoglires</taxon>
        <taxon>Glires</taxon>
        <taxon>Rodentia</taxon>
        <taxon>Myomorpha</taxon>
        <taxon>Muroidea</taxon>
        <taxon>Muridae</taxon>
        <taxon>Murinae</taxon>
        <taxon>Mus</taxon>
        <taxon>Mus</taxon>
    </lineage>
</organism>
<accession>Q9D722</accession>
<accession>A2A477</accession>
<accession>Q3U5N3</accession>
<accession>Q9CXJ2</accession>
<accession>Q9D9G1</accession>
<feature type="chain" id="PRO_0000079454" description="Oxidative stress-responsive serine-rich protein 1">
    <location>
        <begin position="1"/>
        <end position="291"/>
    </location>
</feature>
<feature type="region of interest" description="Disordered" evidence="2">
    <location>
        <begin position="29"/>
        <end position="139"/>
    </location>
</feature>
<feature type="compositionally biased region" description="Basic residues" evidence="2">
    <location>
        <begin position="65"/>
        <end position="83"/>
    </location>
</feature>
<feature type="compositionally biased region" description="Polar residues" evidence="2">
    <location>
        <begin position="95"/>
        <end position="105"/>
    </location>
</feature>
<feature type="modified residue" description="Phosphothreonine" evidence="1">
    <location>
        <position position="143"/>
    </location>
</feature>
<feature type="sequence variant" description="In strain: NOD." evidence="3">
    <original>G</original>
    <variation>R</variation>
    <location>
        <position position="201"/>
    </location>
</feature>
<feature type="sequence conflict" description="In Ref. 1; BAB29272." evidence="4" ref="1">
    <original>R</original>
    <variation>K</variation>
    <location>
        <position position="67"/>
    </location>
</feature>
<feature type="sequence conflict" description="In Ref. 1; BAB29272." evidence="4" ref="1">
    <original>R</original>
    <variation>A</variation>
    <location>
        <position position="81"/>
    </location>
</feature>
<feature type="sequence conflict" description="In Ref. 1; BAB24812." evidence="4" ref="1">
    <original>R</original>
    <variation>G</variation>
    <location>
        <position position="81"/>
    </location>
</feature>
<reference key="1">
    <citation type="journal article" date="2005" name="Science">
        <title>The transcriptional landscape of the mammalian genome.</title>
        <authorList>
            <person name="Carninci P."/>
            <person name="Kasukawa T."/>
            <person name="Katayama S."/>
            <person name="Gough J."/>
            <person name="Frith M.C."/>
            <person name="Maeda N."/>
            <person name="Oyama R."/>
            <person name="Ravasi T."/>
            <person name="Lenhard B."/>
            <person name="Wells C."/>
            <person name="Kodzius R."/>
            <person name="Shimokawa K."/>
            <person name="Bajic V.B."/>
            <person name="Brenner S.E."/>
            <person name="Batalov S."/>
            <person name="Forrest A.R."/>
            <person name="Zavolan M."/>
            <person name="Davis M.J."/>
            <person name="Wilming L.G."/>
            <person name="Aidinis V."/>
            <person name="Allen J.E."/>
            <person name="Ambesi-Impiombato A."/>
            <person name="Apweiler R."/>
            <person name="Aturaliya R.N."/>
            <person name="Bailey T.L."/>
            <person name="Bansal M."/>
            <person name="Baxter L."/>
            <person name="Beisel K.W."/>
            <person name="Bersano T."/>
            <person name="Bono H."/>
            <person name="Chalk A.M."/>
            <person name="Chiu K.P."/>
            <person name="Choudhary V."/>
            <person name="Christoffels A."/>
            <person name="Clutterbuck D.R."/>
            <person name="Crowe M.L."/>
            <person name="Dalla E."/>
            <person name="Dalrymple B.P."/>
            <person name="de Bono B."/>
            <person name="Della Gatta G."/>
            <person name="di Bernardo D."/>
            <person name="Down T."/>
            <person name="Engstrom P."/>
            <person name="Fagiolini M."/>
            <person name="Faulkner G."/>
            <person name="Fletcher C.F."/>
            <person name="Fukushima T."/>
            <person name="Furuno M."/>
            <person name="Futaki S."/>
            <person name="Gariboldi M."/>
            <person name="Georgii-Hemming P."/>
            <person name="Gingeras T.R."/>
            <person name="Gojobori T."/>
            <person name="Green R.E."/>
            <person name="Gustincich S."/>
            <person name="Harbers M."/>
            <person name="Hayashi Y."/>
            <person name="Hensch T.K."/>
            <person name="Hirokawa N."/>
            <person name="Hill D."/>
            <person name="Huminiecki L."/>
            <person name="Iacono M."/>
            <person name="Ikeo K."/>
            <person name="Iwama A."/>
            <person name="Ishikawa T."/>
            <person name="Jakt M."/>
            <person name="Kanapin A."/>
            <person name="Katoh M."/>
            <person name="Kawasawa Y."/>
            <person name="Kelso J."/>
            <person name="Kitamura H."/>
            <person name="Kitano H."/>
            <person name="Kollias G."/>
            <person name="Krishnan S.P."/>
            <person name="Kruger A."/>
            <person name="Kummerfeld S.K."/>
            <person name="Kurochkin I.V."/>
            <person name="Lareau L.F."/>
            <person name="Lazarevic D."/>
            <person name="Lipovich L."/>
            <person name="Liu J."/>
            <person name="Liuni S."/>
            <person name="McWilliam S."/>
            <person name="Madan Babu M."/>
            <person name="Madera M."/>
            <person name="Marchionni L."/>
            <person name="Matsuda H."/>
            <person name="Matsuzawa S."/>
            <person name="Miki H."/>
            <person name="Mignone F."/>
            <person name="Miyake S."/>
            <person name="Morris K."/>
            <person name="Mottagui-Tabar S."/>
            <person name="Mulder N."/>
            <person name="Nakano N."/>
            <person name="Nakauchi H."/>
            <person name="Ng P."/>
            <person name="Nilsson R."/>
            <person name="Nishiguchi S."/>
            <person name="Nishikawa S."/>
            <person name="Nori F."/>
            <person name="Ohara O."/>
            <person name="Okazaki Y."/>
            <person name="Orlando V."/>
            <person name="Pang K.C."/>
            <person name="Pavan W.J."/>
            <person name="Pavesi G."/>
            <person name="Pesole G."/>
            <person name="Petrovsky N."/>
            <person name="Piazza S."/>
            <person name="Reed J."/>
            <person name="Reid J.F."/>
            <person name="Ring B.Z."/>
            <person name="Ringwald M."/>
            <person name="Rost B."/>
            <person name="Ruan Y."/>
            <person name="Salzberg S.L."/>
            <person name="Sandelin A."/>
            <person name="Schneider C."/>
            <person name="Schoenbach C."/>
            <person name="Sekiguchi K."/>
            <person name="Semple C.A."/>
            <person name="Seno S."/>
            <person name="Sessa L."/>
            <person name="Sheng Y."/>
            <person name="Shibata Y."/>
            <person name="Shimada H."/>
            <person name="Shimada K."/>
            <person name="Silva D."/>
            <person name="Sinclair B."/>
            <person name="Sperling S."/>
            <person name="Stupka E."/>
            <person name="Sugiura K."/>
            <person name="Sultana R."/>
            <person name="Takenaka Y."/>
            <person name="Taki K."/>
            <person name="Tammoja K."/>
            <person name="Tan S.L."/>
            <person name="Tang S."/>
            <person name="Taylor M.S."/>
            <person name="Tegner J."/>
            <person name="Teichmann S.A."/>
            <person name="Ueda H.R."/>
            <person name="van Nimwegen E."/>
            <person name="Verardo R."/>
            <person name="Wei C.L."/>
            <person name="Yagi K."/>
            <person name="Yamanishi H."/>
            <person name="Zabarovsky E."/>
            <person name="Zhu S."/>
            <person name="Zimmer A."/>
            <person name="Hide W."/>
            <person name="Bult C."/>
            <person name="Grimmond S.M."/>
            <person name="Teasdale R.D."/>
            <person name="Liu E.T."/>
            <person name="Brusic V."/>
            <person name="Quackenbush J."/>
            <person name="Wahlestedt C."/>
            <person name="Mattick J.S."/>
            <person name="Hume D.A."/>
            <person name="Kai C."/>
            <person name="Sasaki D."/>
            <person name="Tomaru Y."/>
            <person name="Fukuda S."/>
            <person name="Kanamori-Katayama M."/>
            <person name="Suzuki M."/>
            <person name="Aoki J."/>
            <person name="Arakawa T."/>
            <person name="Iida J."/>
            <person name="Imamura K."/>
            <person name="Itoh M."/>
            <person name="Kato T."/>
            <person name="Kawaji H."/>
            <person name="Kawagashira N."/>
            <person name="Kawashima T."/>
            <person name="Kojima M."/>
            <person name="Kondo S."/>
            <person name="Konno H."/>
            <person name="Nakano K."/>
            <person name="Ninomiya N."/>
            <person name="Nishio T."/>
            <person name="Okada M."/>
            <person name="Plessy C."/>
            <person name="Shibata K."/>
            <person name="Shiraki T."/>
            <person name="Suzuki S."/>
            <person name="Tagami M."/>
            <person name="Waki K."/>
            <person name="Watahiki A."/>
            <person name="Okamura-Oho Y."/>
            <person name="Suzuki H."/>
            <person name="Kawai J."/>
            <person name="Hayashizaki Y."/>
        </authorList>
    </citation>
    <scope>NUCLEOTIDE SEQUENCE [LARGE SCALE MRNA]</scope>
    <scope>VARIANT ARG-201</scope>
    <source>
        <strain>C57BL/6J</strain>
        <strain>NOD</strain>
        <tissue>Bone marrow</tissue>
        <tissue>Embryonic head</tissue>
        <tissue>Testis</tissue>
        <tissue>Thymus</tissue>
        <tissue>Tongue</tissue>
    </source>
</reference>
<reference key="2">
    <citation type="journal article" date="2009" name="PLoS Biol.">
        <title>Lineage-specific biology revealed by a finished genome assembly of the mouse.</title>
        <authorList>
            <person name="Church D.M."/>
            <person name="Goodstadt L."/>
            <person name="Hillier L.W."/>
            <person name="Zody M.C."/>
            <person name="Goldstein S."/>
            <person name="She X."/>
            <person name="Bult C.J."/>
            <person name="Agarwala R."/>
            <person name="Cherry J.L."/>
            <person name="DiCuccio M."/>
            <person name="Hlavina W."/>
            <person name="Kapustin Y."/>
            <person name="Meric P."/>
            <person name="Maglott D."/>
            <person name="Birtle Z."/>
            <person name="Marques A.C."/>
            <person name="Graves T."/>
            <person name="Zhou S."/>
            <person name="Teague B."/>
            <person name="Potamousis K."/>
            <person name="Churas C."/>
            <person name="Place M."/>
            <person name="Herschleb J."/>
            <person name="Runnheim R."/>
            <person name="Forrest D."/>
            <person name="Amos-Landgraf J."/>
            <person name="Schwartz D.C."/>
            <person name="Cheng Z."/>
            <person name="Lindblad-Toh K."/>
            <person name="Eichler E.E."/>
            <person name="Ponting C.P."/>
        </authorList>
    </citation>
    <scope>NUCLEOTIDE SEQUENCE [LARGE SCALE GENOMIC DNA]</scope>
    <source>
        <strain>C57BL/6J</strain>
    </source>
</reference>
<reference key="3">
    <citation type="journal article" date="2004" name="Genome Res.">
        <title>The status, quality, and expansion of the NIH full-length cDNA project: the Mammalian Gene Collection (MGC).</title>
        <authorList>
            <consortium name="The MGC Project Team"/>
        </authorList>
    </citation>
    <scope>NUCLEOTIDE SEQUENCE [LARGE SCALE MRNA]</scope>
    <source>
        <tissue>Mammary tumor</tissue>
    </source>
</reference>
<sequence>MKSEAKDGEEESLQTAFKKLRVDASGSIISLSVGEGPSVRASARTAADDTKPKTMCASKDSWHGSTRKSSRGAVRTQRRRRSKSPVLHPPKFIHCSTTAPPSSSQLKHRSQTEPPDGISGRGISTPKEFNAGENSTSLDVNHTGAAIEPLRSSVLRLPSESKTEELSDATQVSQESLTANDLSDFQSVSKLSQGKPCVCVGKECQCKRWHDMEVYSFSGLQNVPPLAPERRSLEDYSQSLHTRTLSGSPRSCSEQARVYVDDVTIEDLAGYMEYYLYIPKKMSHMAEMMYT</sequence>
<dbReference type="EMBL" id="AK006969">
    <property type="protein sequence ID" value="BAB24812.1"/>
    <property type="molecule type" value="mRNA"/>
</dbReference>
<dbReference type="EMBL" id="AK009708">
    <property type="protein sequence ID" value="BAB26453.1"/>
    <property type="molecule type" value="mRNA"/>
</dbReference>
<dbReference type="EMBL" id="AK014323">
    <property type="protein sequence ID" value="BAB29272.1"/>
    <property type="molecule type" value="mRNA"/>
</dbReference>
<dbReference type="EMBL" id="AK088622">
    <property type="protein sequence ID" value="BAC40460.1"/>
    <property type="molecule type" value="mRNA"/>
</dbReference>
<dbReference type="EMBL" id="AK153499">
    <property type="protein sequence ID" value="BAE32045.1"/>
    <property type="molecule type" value="mRNA"/>
</dbReference>
<dbReference type="EMBL" id="AL589876">
    <property type="status" value="NOT_ANNOTATED_CDS"/>
    <property type="molecule type" value="Genomic_DNA"/>
</dbReference>
<dbReference type="EMBL" id="BC005579">
    <property type="protein sequence ID" value="AAH05579.1"/>
    <property type="molecule type" value="mRNA"/>
</dbReference>
<dbReference type="CCDS" id="CCDS17009.1"/>
<dbReference type="RefSeq" id="NP_001405466.1">
    <property type="nucleotide sequence ID" value="NM_001418537.1"/>
</dbReference>
<dbReference type="RefSeq" id="NP_001405467.1">
    <property type="nucleotide sequence ID" value="NM_001418538.1"/>
</dbReference>
<dbReference type="RefSeq" id="NP_001405468.1">
    <property type="nucleotide sequence ID" value="NM_001418539.1"/>
</dbReference>
<dbReference type="RefSeq" id="NP_079975.2">
    <property type="nucleotide sequence ID" value="NM_025699.2"/>
</dbReference>
<dbReference type="RefSeq" id="XP_006500088.1">
    <property type="nucleotide sequence ID" value="XM_006500025.1"/>
</dbReference>
<dbReference type="RefSeq" id="XP_006500089.1">
    <property type="nucleotide sequence ID" value="XM_006500026.2"/>
</dbReference>
<dbReference type="FunCoup" id="Q9D722">
    <property type="interactions" value="179"/>
</dbReference>
<dbReference type="STRING" id="10090.ENSMUSP00000131932"/>
<dbReference type="iPTMnet" id="Q9D722"/>
<dbReference type="PhosphoSitePlus" id="Q9D722"/>
<dbReference type="SwissPalm" id="Q9D722"/>
<dbReference type="PaxDb" id="10090-ENSMUSP00000131932"/>
<dbReference type="ProteomicsDB" id="294121"/>
<dbReference type="Antibodypedia" id="43666">
    <property type="antibodies" value="67 antibodies from 16 providers"/>
</dbReference>
<dbReference type="Ensembl" id="ENSMUST00000046908.10">
    <property type="protein sequence ID" value="ENSMUSP00000039190.4"/>
    <property type="gene ID" value="ENSMUSG00000035399.13"/>
</dbReference>
<dbReference type="Ensembl" id="ENSMUST00000104954.9">
    <property type="protein sequence ID" value="ENSMUSP00000131932.2"/>
    <property type="gene ID" value="ENSMUSG00000035399.13"/>
</dbReference>
<dbReference type="GeneID" id="66680"/>
<dbReference type="KEGG" id="mmu:66680"/>
<dbReference type="UCSC" id="uc008nsq.2">
    <property type="organism name" value="mouse"/>
</dbReference>
<dbReference type="AGR" id="MGI:1913930"/>
<dbReference type="CTD" id="51526"/>
<dbReference type="MGI" id="MGI:1913930">
    <property type="gene designation" value="Oser1"/>
</dbReference>
<dbReference type="VEuPathDB" id="HostDB:ENSMUSG00000035399"/>
<dbReference type="eggNOG" id="ENOG502QUK0">
    <property type="taxonomic scope" value="Eukaryota"/>
</dbReference>
<dbReference type="GeneTree" id="ENSGT00390000018547"/>
<dbReference type="HOGENOM" id="CLU_050222_0_0_1"/>
<dbReference type="InParanoid" id="Q9D722"/>
<dbReference type="OMA" id="KACQCKL"/>
<dbReference type="OrthoDB" id="10045817at2759"/>
<dbReference type="PhylomeDB" id="Q9D722"/>
<dbReference type="TreeFam" id="TF331727"/>
<dbReference type="BioGRID-ORCS" id="66680">
    <property type="hits" value="6 hits in 76 CRISPR screens"/>
</dbReference>
<dbReference type="ChiTaRS" id="Oser1">
    <property type="organism name" value="mouse"/>
</dbReference>
<dbReference type="PRO" id="PR:Q9D722"/>
<dbReference type="Proteomes" id="UP000000589">
    <property type="component" value="Chromosome 2"/>
</dbReference>
<dbReference type="RNAct" id="Q9D722">
    <property type="molecule type" value="protein"/>
</dbReference>
<dbReference type="Bgee" id="ENSMUSG00000035399">
    <property type="expression patterns" value="Expressed in primary oocyte and 64 other cell types or tissues"/>
</dbReference>
<dbReference type="ExpressionAtlas" id="Q9D722">
    <property type="expression patterns" value="baseline and differential"/>
</dbReference>
<dbReference type="GO" id="GO:0005634">
    <property type="term" value="C:nucleus"/>
    <property type="evidence" value="ECO:0007669"/>
    <property type="project" value="Ensembl"/>
</dbReference>
<dbReference type="InterPro" id="IPR008494">
    <property type="entry name" value="DUF776"/>
</dbReference>
<dbReference type="PANTHER" id="PTHR31383">
    <property type="entry name" value="OXIDATIVE STRESS-RESPONSE SERINE-RICH PROTEIN 1"/>
    <property type="match status" value="1"/>
</dbReference>
<dbReference type="PANTHER" id="PTHR31383:SF2">
    <property type="entry name" value="OXIDATIVE STRESS-RESPONSIVE SERINE-RICH PROTEIN 1"/>
    <property type="match status" value="1"/>
</dbReference>
<dbReference type="Pfam" id="PF05604">
    <property type="entry name" value="DUF776"/>
    <property type="match status" value="1"/>
</dbReference>
<name>OSER1_MOUSE</name>